<evidence type="ECO:0000255" key="1">
    <source>
        <dbReference type="HAMAP-Rule" id="MF_00008"/>
    </source>
</evidence>
<evidence type="ECO:0007829" key="2">
    <source>
        <dbReference type="PDB" id="3UWL"/>
    </source>
</evidence>
<evidence type="ECO:0007829" key="3">
    <source>
        <dbReference type="PDB" id="4O7U"/>
    </source>
</evidence>
<evidence type="ECO:0007829" key="4">
    <source>
        <dbReference type="PDB" id="6QYA"/>
    </source>
</evidence>
<gene>
    <name evidence="1" type="primary">thyA</name>
    <name type="ordered locus">EF_1576</name>
</gene>
<comment type="function">
    <text evidence="1">Catalyzes the reductive methylation of 2'-deoxyuridine-5'-monophosphate (dUMP) to 2'-deoxythymidine-5'-monophosphate (dTMP) while utilizing 5,10-methylenetetrahydrofolate (mTHF) as the methyl donor and reductant in the reaction, yielding dihydrofolate (DHF) as a by-product. This enzymatic reaction provides an intracellular de novo source of dTMP, an essential precursor for DNA biosynthesis.</text>
</comment>
<comment type="catalytic activity">
    <reaction evidence="1">
        <text>dUMP + (6R)-5,10-methylene-5,6,7,8-tetrahydrofolate = 7,8-dihydrofolate + dTMP</text>
        <dbReference type="Rhea" id="RHEA:12104"/>
        <dbReference type="ChEBI" id="CHEBI:15636"/>
        <dbReference type="ChEBI" id="CHEBI:57451"/>
        <dbReference type="ChEBI" id="CHEBI:63528"/>
        <dbReference type="ChEBI" id="CHEBI:246422"/>
        <dbReference type="EC" id="2.1.1.45"/>
    </reaction>
</comment>
<comment type="pathway">
    <text evidence="1">Pyrimidine metabolism; dTTP biosynthesis.</text>
</comment>
<comment type="subunit">
    <text evidence="1">Homodimer.</text>
</comment>
<comment type="subcellular location">
    <subcellularLocation>
        <location evidence="1">Cytoplasm</location>
    </subcellularLocation>
</comment>
<comment type="similarity">
    <text evidence="1">Belongs to the thymidylate synthase family. Bacterial-type ThyA subfamily.</text>
</comment>
<protein>
    <recommendedName>
        <fullName evidence="1">Thymidylate synthase</fullName>
        <shortName evidence="1">TS</shortName>
        <shortName evidence="1">TSase</shortName>
        <ecNumber evidence="1">2.1.1.45</ecNumber>
    </recommendedName>
</protein>
<name>TYSY_ENTFA</name>
<accession>Q834R3</accession>
<keyword id="KW-0002">3D-structure</keyword>
<keyword id="KW-0963">Cytoplasm</keyword>
<keyword id="KW-0489">Methyltransferase</keyword>
<keyword id="KW-0545">Nucleotide biosynthesis</keyword>
<keyword id="KW-1185">Reference proteome</keyword>
<keyword id="KW-0808">Transferase</keyword>
<reference key="1">
    <citation type="journal article" date="2003" name="Science">
        <title>Role of mobile DNA in the evolution of vancomycin-resistant Enterococcus faecalis.</title>
        <authorList>
            <person name="Paulsen I.T."/>
            <person name="Banerjei L."/>
            <person name="Myers G.S.A."/>
            <person name="Nelson K.E."/>
            <person name="Seshadri R."/>
            <person name="Read T.D."/>
            <person name="Fouts D.E."/>
            <person name="Eisen J.A."/>
            <person name="Gill S.R."/>
            <person name="Heidelberg J.F."/>
            <person name="Tettelin H."/>
            <person name="Dodson R.J."/>
            <person name="Umayam L.A."/>
            <person name="Brinkac L.M."/>
            <person name="Beanan M.J."/>
            <person name="Daugherty S.C."/>
            <person name="DeBoy R.T."/>
            <person name="Durkin S.A."/>
            <person name="Kolonay J.F."/>
            <person name="Madupu R."/>
            <person name="Nelson W.C."/>
            <person name="Vamathevan J.J."/>
            <person name="Tran B."/>
            <person name="Upton J."/>
            <person name="Hansen T."/>
            <person name="Shetty J."/>
            <person name="Khouri H.M."/>
            <person name="Utterback T.R."/>
            <person name="Radune D."/>
            <person name="Ketchum K.A."/>
            <person name="Dougherty B.A."/>
            <person name="Fraser C.M."/>
        </authorList>
    </citation>
    <scope>NUCLEOTIDE SEQUENCE [LARGE SCALE GENOMIC DNA]</scope>
    <source>
        <strain>ATCC 700802 / V583</strain>
    </source>
</reference>
<sequence>MEEAYLALGKKILEEGHFKEDRTGTGTYSLFGYQMRFDLAKGFPLLTTKRVPFGLIKSELLWFLKGDTNIRYLLERNNHIWDEWAFERYVKSADYQGPDMTDFGHRVLQDPAFAEQYKEEHQKFCDAILNDAEFAEKYGELGNIYGAQWRHWETKDGSFIDQLANVIEMIKTNPDSRRLIVSAWNPEDVPSMALPPCHTMFQFYVNEGKLSCQLYQRSADVFLGVPFNIASYALLTHLIAHETGLEVGEFVHTLGDAHLYQNHVEQMQEQLSREVRSFPTLVLNPDKASVFDFDMEDIKVEGYDPHPTIKAPIAV</sequence>
<organism>
    <name type="scientific">Enterococcus faecalis (strain ATCC 700802 / V583)</name>
    <dbReference type="NCBI Taxonomy" id="226185"/>
    <lineage>
        <taxon>Bacteria</taxon>
        <taxon>Bacillati</taxon>
        <taxon>Bacillota</taxon>
        <taxon>Bacilli</taxon>
        <taxon>Lactobacillales</taxon>
        <taxon>Enterococcaceae</taxon>
        <taxon>Enterococcus</taxon>
    </lineage>
</organism>
<dbReference type="EC" id="2.1.1.45" evidence="1"/>
<dbReference type="EMBL" id="AE016830">
    <property type="protein sequence ID" value="AAO81363.1"/>
    <property type="molecule type" value="Genomic_DNA"/>
</dbReference>
<dbReference type="RefSeq" id="NP_815293.1">
    <property type="nucleotide sequence ID" value="NC_004668.1"/>
</dbReference>
<dbReference type="RefSeq" id="WP_002357569.1">
    <property type="nucleotide sequence ID" value="NZ_KE136528.1"/>
</dbReference>
<dbReference type="PDB" id="3UWL">
    <property type="method" value="X-ray"/>
    <property type="resolution" value="2.07 A"/>
    <property type="chains" value="A/B/C/D=1-315"/>
</dbReference>
<dbReference type="PDB" id="4O7U">
    <property type="method" value="X-ray"/>
    <property type="resolution" value="2.40 A"/>
    <property type="chains" value="A/B/C/D=1-315"/>
</dbReference>
<dbReference type="PDB" id="5J7W">
    <property type="method" value="X-ray"/>
    <property type="resolution" value="2.50 A"/>
    <property type="chains" value="A/B/C/D=1-315"/>
</dbReference>
<dbReference type="PDB" id="6QXS">
    <property type="method" value="X-ray"/>
    <property type="resolution" value="2.88 A"/>
    <property type="chains" value="A/B/C/D=1-315"/>
</dbReference>
<dbReference type="PDB" id="6QYA">
    <property type="method" value="X-ray"/>
    <property type="resolution" value="1.76 A"/>
    <property type="chains" value="A/B/C/D=1-315"/>
</dbReference>
<dbReference type="PDBsum" id="3UWL"/>
<dbReference type="PDBsum" id="4O7U"/>
<dbReference type="PDBsum" id="5J7W"/>
<dbReference type="PDBsum" id="6QXS"/>
<dbReference type="PDBsum" id="6QYA"/>
<dbReference type="SMR" id="Q834R3"/>
<dbReference type="STRING" id="226185.EF_1576"/>
<dbReference type="BindingDB" id="Q834R3"/>
<dbReference type="ChEMBL" id="CHEMBL1795144"/>
<dbReference type="DrugCentral" id="Q834R3"/>
<dbReference type="EnsemblBacteria" id="AAO81363">
    <property type="protein sequence ID" value="AAO81363"/>
    <property type="gene ID" value="EF_1576"/>
</dbReference>
<dbReference type="KEGG" id="efa:EF1576"/>
<dbReference type="PATRIC" id="fig|226185.45.peg.1929"/>
<dbReference type="eggNOG" id="COG0207">
    <property type="taxonomic scope" value="Bacteria"/>
</dbReference>
<dbReference type="HOGENOM" id="CLU_021669_0_2_9"/>
<dbReference type="BRENDA" id="2.1.1.45">
    <property type="organism ID" value="2095"/>
</dbReference>
<dbReference type="UniPathway" id="UPA00575"/>
<dbReference type="EvolutionaryTrace" id="Q834R3"/>
<dbReference type="Proteomes" id="UP000001415">
    <property type="component" value="Chromosome"/>
</dbReference>
<dbReference type="GO" id="GO:0005829">
    <property type="term" value="C:cytosol"/>
    <property type="evidence" value="ECO:0007669"/>
    <property type="project" value="TreeGrafter"/>
</dbReference>
<dbReference type="GO" id="GO:0004799">
    <property type="term" value="F:thymidylate synthase activity"/>
    <property type="evidence" value="ECO:0007669"/>
    <property type="project" value="UniProtKB-UniRule"/>
</dbReference>
<dbReference type="GO" id="GO:0006231">
    <property type="term" value="P:dTMP biosynthetic process"/>
    <property type="evidence" value="ECO:0007669"/>
    <property type="project" value="UniProtKB-UniRule"/>
</dbReference>
<dbReference type="GO" id="GO:0006235">
    <property type="term" value="P:dTTP biosynthetic process"/>
    <property type="evidence" value="ECO:0007669"/>
    <property type="project" value="UniProtKB-UniRule"/>
</dbReference>
<dbReference type="GO" id="GO:0032259">
    <property type="term" value="P:methylation"/>
    <property type="evidence" value="ECO:0007669"/>
    <property type="project" value="UniProtKB-KW"/>
</dbReference>
<dbReference type="CDD" id="cd00351">
    <property type="entry name" value="TS_Pyrimidine_HMase"/>
    <property type="match status" value="1"/>
</dbReference>
<dbReference type="Gene3D" id="3.30.572.10">
    <property type="entry name" value="Thymidylate synthase/dCMP hydroxymethylase domain"/>
    <property type="match status" value="1"/>
</dbReference>
<dbReference type="HAMAP" id="MF_00008">
    <property type="entry name" value="Thymidy_synth_bact"/>
    <property type="match status" value="1"/>
</dbReference>
<dbReference type="InterPro" id="IPR045097">
    <property type="entry name" value="Thymidate_synth/dCMP_Mease"/>
</dbReference>
<dbReference type="InterPro" id="IPR023451">
    <property type="entry name" value="Thymidate_synth/dCMP_Mease_dom"/>
</dbReference>
<dbReference type="InterPro" id="IPR036926">
    <property type="entry name" value="Thymidate_synth/dCMP_Mease_sf"/>
</dbReference>
<dbReference type="InterPro" id="IPR000398">
    <property type="entry name" value="Thymidylate_synthase"/>
</dbReference>
<dbReference type="InterPro" id="IPR020940">
    <property type="entry name" value="Thymidylate_synthase_AS"/>
</dbReference>
<dbReference type="NCBIfam" id="NF002496">
    <property type="entry name" value="PRK01827.1-2"/>
    <property type="match status" value="1"/>
</dbReference>
<dbReference type="NCBIfam" id="TIGR03284">
    <property type="entry name" value="thym_sym"/>
    <property type="match status" value="1"/>
</dbReference>
<dbReference type="PANTHER" id="PTHR11548:SF9">
    <property type="entry name" value="THYMIDYLATE SYNTHASE"/>
    <property type="match status" value="1"/>
</dbReference>
<dbReference type="PANTHER" id="PTHR11548">
    <property type="entry name" value="THYMIDYLATE SYNTHASE 1"/>
    <property type="match status" value="1"/>
</dbReference>
<dbReference type="Pfam" id="PF00303">
    <property type="entry name" value="Thymidylat_synt"/>
    <property type="match status" value="1"/>
</dbReference>
<dbReference type="PRINTS" id="PR00108">
    <property type="entry name" value="THYMDSNTHASE"/>
</dbReference>
<dbReference type="SUPFAM" id="SSF55831">
    <property type="entry name" value="Thymidylate synthase/dCMP hydroxymethylase"/>
    <property type="match status" value="1"/>
</dbReference>
<dbReference type="PROSITE" id="PS00091">
    <property type="entry name" value="THYMIDYLATE_SYNTHASE"/>
    <property type="match status" value="1"/>
</dbReference>
<proteinExistence type="evidence at protein level"/>
<feature type="chain" id="PRO_0000140957" description="Thymidylate synthase">
    <location>
        <begin position="1"/>
        <end position="315"/>
    </location>
</feature>
<feature type="active site" description="Nucleophile" evidence="1">
    <location>
        <position position="197"/>
    </location>
</feature>
<feature type="binding site" description="in other chain" evidence="1">
    <location>
        <position position="22"/>
    </location>
    <ligand>
        <name>dUMP</name>
        <dbReference type="ChEBI" id="CHEBI:246422"/>
        <note>ligand shared between dimeric partners</note>
    </ligand>
</feature>
<feature type="binding site" evidence="1">
    <location>
        <begin position="177"/>
        <end position="178"/>
    </location>
    <ligand>
        <name>dUMP</name>
        <dbReference type="ChEBI" id="CHEBI:246422"/>
        <note>ligand shared between dimeric partners</note>
    </ligand>
</feature>
<feature type="binding site" description="in other chain" evidence="1">
    <location>
        <begin position="217"/>
        <end position="220"/>
    </location>
    <ligand>
        <name>dUMP</name>
        <dbReference type="ChEBI" id="CHEBI:246422"/>
        <note>ligand shared between dimeric partners</note>
    </ligand>
</feature>
<feature type="binding site" evidence="1">
    <location>
        <position position="220"/>
    </location>
    <ligand>
        <name>(6R)-5,10-methylene-5,6,7,8-tetrahydrofolate</name>
        <dbReference type="ChEBI" id="CHEBI:15636"/>
    </ligand>
</feature>
<feature type="binding site" description="in other chain" evidence="1">
    <location>
        <position position="228"/>
    </location>
    <ligand>
        <name>dUMP</name>
        <dbReference type="ChEBI" id="CHEBI:246422"/>
        <note>ligand shared between dimeric partners</note>
    </ligand>
</feature>
<feature type="binding site" description="in other chain" evidence="1">
    <location>
        <begin position="258"/>
        <end position="260"/>
    </location>
    <ligand>
        <name>dUMP</name>
        <dbReference type="ChEBI" id="CHEBI:246422"/>
        <note>ligand shared between dimeric partners</note>
    </ligand>
</feature>
<feature type="binding site" evidence="1">
    <location>
        <position position="314"/>
    </location>
    <ligand>
        <name>(6R)-5,10-methylene-5,6,7,8-tetrahydrofolate</name>
        <dbReference type="ChEBI" id="CHEBI:15636"/>
    </ligand>
</feature>
<feature type="helix" evidence="4">
    <location>
        <begin position="2"/>
        <end position="15"/>
    </location>
</feature>
<feature type="strand" evidence="4">
    <location>
        <begin position="17"/>
        <end position="19"/>
    </location>
</feature>
<feature type="strand" evidence="4">
    <location>
        <begin position="27"/>
        <end position="38"/>
    </location>
</feature>
<feature type="helix" evidence="4">
    <location>
        <begin position="39"/>
        <end position="41"/>
    </location>
</feature>
<feature type="strand" evidence="4">
    <location>
        <begin position="47"/>
        <end position="49"/>
    </location>
</feature>
<feature type="helix" evidence="4">
    <location>
        <begin position="53"/>
        <end position="64"/>
    </location>
</feature>
<feature type="helix" evidence="4">
    <location>
        <begin position="71"/>
        <end position="75"/>
    </location>
</feature>
<feature type="helix" evidence="4">
    <location>
        <begin position="82"/>
        <end position="89"/>
    </location>
</feature>
<feature type="strand" evidence="2">
    <location>
        <begin position="92"/>
        <end position="94"/>
    </location>
</feature>
<feature type="helix" evidence="4">
    <location>
        <begin position="103"/>
        <end position="109"/>
    </location>
</feature>
<feature type="helix" evidence="3">
    <location>
        <begin position="111"/>
        <end position="115"/>
    </location>
</feature>
<feature type="turn" evidence="4">
    <location>
        <begin position="127"/>
        <end position="129"/>
    </location>
</feature>
<feature type="helix" evidence="4">
    <location>
        <begin position="135"/>
        <end position="138"/>
    </location>
</feature>
<feature type="helix" evidence="4">
    <location>
        <begin position="145"/>
        <end position="150"/>
    </location>
</feature>
<feature type="helix" evidence="4">
    <location>
        <begin position="162"/>
        <end position="172"/>
    </location>
</feature>
<feature type="strand" evidence="4">
    <location>
        <begin position="180"/>
        <end position="182"/>
    </location>
</feature>
<feature type="turn" evidence="4">
    <location>
        <begin position="186"/>
        <end position="188"/>
    </location>
</feature>
<feature type="helix" evidence="4">
    <location>
        <begin position="189"/>
        <end position="191"/>
    </location>
</feature>
<feature type="strand" evidence="4">
    <location>
        <begin position="192"/>
        <end position="194"/>
    </location>
</feature>
<feature type="strand" evidence="4">
    <location>
        <begin position="197"/>
        <end position="206"/>
    </location>
</feature>
<feature type="strand" evidence="4">
    <location>
        <begin position="209"/>
        <end position="220"/>
    </location>
</feature>
<feature type="turn" evidence="4">
    <location>
        <begin position="221"/>
        <end position="224"/>
    </location>
</feature>
<feature type="helix" evidence="4">
    <location>
        <begin position="225"/>
        <end position="242"/>
    </location>
</feature>
<feature type="strand" evidence="4">
    <location>
        <begin position="246"/>
        <end position="260"/>
    </location>
</feature>
<feature type="helix" evidence="4">
    <location>
        <begin position="261"/>
        <end position="263"/>
    </location>
</feature>
<feature type="helix" evidence="4">
    <location>
        <begin position="264"/>
        <end position="271"/>
    </location>
</feature>
<feature type="strand" evidence="4">
    <location>
        <begin position="280"/>
        <end position="283"/>
    </location>
</feature>
<feature type="helix" evidence="4">
    <location>
        <begin position="290"/>
        <end position="292"/>
    </location>
</feature>
<feature type="helix" evidence="4">
    <location>
        <begin position="295"/>
        <end position="297"/>
    </location>
</feature>
<feature type="strand" evidence="4">
    <location>
        <begin position="298"/>
        <end position="302"/>
    </location>
</feature>